<feature type="chain" id="PRO_0000057211" description="Ribonuclease pancreatic">
    <location>
        <begin position="1"/>
        <end position="128"/>
    </location>
</feature>
<feature type="region of interest" description="Disordered" evidence="2">
    <location>
        <begin position="1"/>
        <end position="24"/>
    </location>
</feature>
<feature type="compositionally biased region" description="Basic and acidic residues" evidence="2">
    <location>
        <begin position="1"/>
        <end position="13"/>
    </location>
</feature>
<feature type="active site" description="Proton acceptor" evidence="1">
    <location>
        <position position="12"/>
    </location>
</feature>
<feature type="active site" description="Proton donor" evidence="1">
    <location>
        <position position="119"/>
    </location>
</feature>
<feature type="binding site" evidence="1">
    <location>
        <position position="7"/>
    </location>
    <ligand>
        <name>substrate</name>
    </ligand>
</feature>
<feature type="binding site" evidence="1">
    <location>
        <position position="10"/>
    </location>
    <ligand>
        <name>substrate</name>
    </ligand>
</feature>
<feature type="binding site" evidence="1">
    <location>
        <begin position="41"/>
        <end position="45"/>
    </location>
    <ligand>
        <name>substrate</name>
    </ligand>
</feature>
<feature type="binding site" evidence="1">
    <location>
        <position position="66"/>
    </location>
    <ligand>
        <name>substrate</name>
    </ligand>
</feature>
<feature type="binding site" evidence="1">
    <location>
        <position position="85"/>
    </location>
    <ligand>
        <name>substrate</name>
    </ligand>
</feature>
<feature type="glycosylation site" description="N-linked (GlcNAc...) asparagine" evidence="3">
    <location>
        <position position="34"/>
    </location>
</feature>
<feature type="disulfide bond" evidence="1">
    <location>
        <begin position="26"/>
        <end position="84"/>
    </location>
</feature>
<feature type="disulfide bond" evidence="1">
    <location>
        <begin position="40"/>
        <end position="95"/>
    </location>
</feature>
<feature type="disulfide bond" evidence="1">
    <location>
        <begin position="58"/>
        <end position="110"/>
    </location>
</feature>
<feature type="disulfide bond" evidence="1">
    <location>
        <begin position="65"/>
        <end position="72"/>
    </location>
</feature>
<comment type="function">
    <text evidence="1">Endonuclease that catalyzes the cleavage of RNA on the 3' side of pyrimidine nucleotides. Acts on single-stranded and double-stranded RNA (By similarity).</text>
</comment>
<comment type="catalytic activity">
    <reaction>
        <text>an [RNA] containing cytidine + H2O = an [RNA]-3'-cytidine-3'-phosphate + a 5'-hydroxy-ribonucleotide-3'-[RNA].</text>
        <dbReference type="EC" id="4.6.1.18"/>
    </reaction>
</comment>
<comment type="catalytic activity">
    <reaction>
        <text>an [RNA] containing uridine + H2O = an [RNA]-3'-uridine-3'-phosphate + a 5'-hydroxy-ribonucleotide-3'-[RNA].</text>
        <dbReference type="EC" id="4.6.1.18"/>
    </reaction>
</comment>
<comment type="subunit">
    <text evidence="1">Monomer. Interacts with and forms tight 1:1 complexes with RNH1. Dimerization of two such complexes may occur. Interaction with RNH1 inhibits this protein (By similarity).</text>
</comment>
<comment type="subcellular location">
    <subcellularLocation>
        <location>Secreted</location>
    </subcellularLocation>
</comment>
<comment type="tissue specificity">
    <text>Pancreas and other tissues and body fluids (indicating it may have other physiological functions besides its role in digestion).</text>
</comment>
<comment type="similarity">
    <text evidence="4">Belongs to the pancreatic ribonuclease family.</text>
</comment>
<gene>
    <name type="primary">RNASE1</name>
    <name type="synonym">RNS1</name>
</gene>
<reference key="1">
    <citation type="journal article" date="1990" name="Mol. Biol. Evol.">
        <title>The primary structure of langur (Presbytis entellus) pancreatic ribonuclease: adaptive features in digestive enzymes in mammals.</title>
        <authorList>
            <person name="Beintema J.J."/>
        </authorList>
    </citation>
    <scope>PROTEIN SEQUENCE</scope>
    <scope>GLYCOSYLATION AT ASN-34</scope>
    <source>
        <tissue>Pancreas</tissue>
    </source>
</reference>
<organism>
    <name type="scientific">Semnopithecus entellus</name>
    <name type="common">Northern plains gray langur</name>
    <name type="synonym">Presbytis entellus</name>
    <dbReference type="NCBI Taxonomy" id="88029"/>
    <lineage>
        <taxon>Eukaryota</taxon>
        <taxon>Metazoa</taxon>
        <taxon>Chordata</taxon>
        <taxon>Craniata</taxon>
        <taxon>Vertebrata</taxon>
        <taxon>Euteleostomi</taxon>
        <taxon>Mammalia</taxon>
        <taxon>Eutheria</taxon>
        <taxon>Euarchontoglires</taxon>
        <taxon>Primates</taxon>
        <taxon>Haplorrhini</taxon>
        <taxon>Catarrhini</taxon>
        <taxon>Cercopithecidae</taxon>
        <taxon>Colobinae</taxon>
        <taxon>Semnopithecus</taxon>
    </lineage>
</organism>
<dbReference type="EC" id="4.6.1.18"/>
<dbReference type="PIR" id="A33083">
    <property type="entry name" value="A33083"/>
</dbReference>
<dbReference type="SMR" id="P19644"/>
<dbReference type="GlyCosmos" id="P19644">
    <property type="glycosylation" value="1 site, No reported glycans"/>
</dbReference>
<dbReference type="iPTMnet" id="P19644"/>
<dbReference type="GO" id="GO:0005576">
    <property type="term" value="C:extracellular region"/>
    <property type="evidence" value="ECO:0007669"/>
    <property type="project" value="UniProtKB-SubCell"/>
</dbReference>
<dbReference type="GO" id="GO:0016829">
    <property type="term" value="F:lyase activity"/>
    <property type="evidence" value="ECO:0007669"/>
    <property type="project" value="UniProtKB-KW"/>
</dbReference>
<dbReference type="GO" id="GO:0003676">
    <property type="term" value="F:nucleic acid binding"/>
    <property type="evidence" value="ECO:0007669"/>
    <property type="project" value="InterPro"/>
</dbReference>
<dbReference type="GO" id="GO:0004522">
    <property type="term" value="F:ribonuclease A activity"/>
    <property type="evidence" value="ECO:0007669"/>
    <property type="project" value="UniProtKB-EC"/>
</dbReference>
<dbReference type="GO" id="GO:0050830">
    <property type="term" value="P:defense response to Gram-positive bacterium"/>
    <property type="evidence" value="ECO:0007669"/>
    <property type="project" value="TreeGrafter"/>
</dbReference>
<dbReference type="CDD" id="cd06265">
    <property type="entry name" value="RNase_A_canonical"/>
    <property type="match status" value="1"/>
</dbReference>
<dbReference type="FunFam" id="3.10.130.10:FF:000001">
    <property type="entry name" value="Ribonuclease pancreatic"/>
    <property type="match status" value="1"/>
</dbReference>
<dbReference type="Gene3D" id="3.10.130.10">
    <property type="entry name" value="Ribonuclease A-like domain"/>
    <property type="match status" value="1"/>
</dbReference>
<dbReference type="InterPro" id="IPR001427">
    <property type="entry name" value="RNaseA"/>
</dbReference>
<dbReference type="InterPro" id="IPR036816">
    <property type="entry name" value="RNaseA-like_dom_sf"/>
</dbReference>
<dbReference type="InterPro" id="IPR023411">
    <property type="entry name" value="RNaseA_AS"/>
</dbReference>
<dbReference type="InterPro" id="IPR023412">
    <property type="entry name" value="RNaseA_domain"/>
</dbReference>
<dbReference type="PANTHER" id="PTHR11437">
    <property type="entry name" value="RIBONUCLEASE"/>
    <property type="match status" value="1"/>
</dbReference>
<dbReference type="PANTHER" id="PTHR11437:SF24">
    <property type="entry name" value="RIBONUCLEASE PANCREATIC"/>
    <property type="match status" value="1"/>
</dbReference>
<dbReference type="Pfam" id="PF00074">
    <property type="entry name" value="RnaseA"/>
    <property type="match status" value="1"/>
</dbReference>
<dbReference type="PRINTS" id="PR00794">
    <property type="entry name" value="RIBONUCLEASE"/>
</dbReference>
<dbReference type="SMART" id="SM00092">
    <property type="entry name" value="RNAse_Pc"/>
    <property type="match status" value="1"/>
</dbReference>
<dbReference type="SUPFAM" id="SSF54076">
    <property type="entry name" value="RNase A-like"/>
    <property type="match status" value="1"/>
</dbReference>
<dbReference type="PROSITE" id="PS00127">
    <property type="entry name" value="RNASE_PANCREATIC"/>
    <property type="match status" value="1"/>
</dbReference>
<keyword id="KW-0903">Direct protein sequencing</keyword>
<keyword id="KW-1015">Disulfide bond</keyword>
<keyword id="KW-0255">Endonuclease</keyword>
<keyword id="KW-0325">Glycoprotein</keyword>
<keyword id="KW-0378">Hydrolase</keyword>
<keyword id="KW-0456">Lyase</keyword>
<keyword id="KW-0540">Nuclease</keyword>
<keyword id="KW-0964">Secreted</keyword>
<proteinExistence type="evidence at protein level"/>
<sequence length="128" mass="14324">GESRAEKFQRQHMDSGSSPSSSSTYCNQMMKLRNMTQGSCKSVNTFVHEPLVDVQNVCFQEKVTCKNGQTNCFKSNSRMHITECRLTNGSKYPNCAYGTSPKERHIIVACEGSPYVPVHFDDSVEDST</sequence>
<accession>P19644</accession>
<protein>
    <recommendedName>
        <fullName>Ribonuclease pancreatic</fullName>
        <ecNumber>4.6.1.18</ecNumber>
    </recommendedName>
    <alternativeName>
        <fullName>RNase 1</fullName>
    </alternativeName>
    <alternativeName>
        <fullName>RNase A</fullName>
    </alternativeName>
</protein>
<name>RNAS1_SEMEN</name>
<evidence type="ECO:0000250" key="1"/>
<evidence type="ECO:0000256" key="2">
    <source>
        <dbReference type="SAM" id="MobiDB-lite"/>
    </source>
</evidence>
<evidence type="ECO:0000269" key="3">
    <source>
    </source>
</evidence>
<evidence type="ECO:0000305" key="4"/>